<gene>
    <name evidence="1" type="primary">rpmD</name>
    <name type="ordered locus">Rmet_3299</name>
</gene>
<evidence type="ECO:0000255" key="1">
    <source>
        <dbReference type="HAMAP-Rule" id="MF_01371"/>
    </source>
</evidence>
<evidence type="ECO:0000305" key="2"/>
<keyword id="KW-1185">Reference proteome</keyword>
<keyword id="KW-0687">Ribonucleoprotein</keyword>
<keyword id="KW-0689">Ribosomal protein</keyword>
<comment type="subunit">
    <text evidence="1">Part of the 50S ribosomal subunit.</text>
</comment>
<comment type="similarity">
    <text evidence="1">Belongs to the universal ribosomal protein uL30 family.</text>
</comment>
<sequence length="60" mass="6690">MSQKTVKVQLVRSLIGTREDHRATVRGLGLRRLNSVSELQDTPAVRGMINKVSYLVKVLA</sequence>
<feature type="chain" id="PRO_0000273837" description="Large ribosomal subunit protein uL30">
    <location>
        <begin position="1"/>
        <end position="60"/>
    </location>
</feature>
<dbReference type="EMBL" id="CP000352">
    <property type="protein sequence ID" value="ABF10171.1"/>
    <property type="molecule type" value="Genomic_DNA"/>
</dbReference>
<dbReference type="RefSeq" id="WP_008642953.1">
    <property type="nucleotide sequence ID" value="NC_007973.1"/>
</dbReference>
<dbReference type="SMR" id="Q1LI55"/>
<dbReference type="STRING" id="266264.Rmet_3299"/>
<dbReference type="GeneID" id="60826618"/>
<dbReference type="KEGG" id="rme:Rmet_3299"/>
<dbReference type="eggNOG" id="COG1841">
    <property type="taxonomic scope" value="Bacteria"/>
</dbReference>
<dbReference type="HOGENOM" id="CLU_131047_1_4_4"/>
<dbReference type="Proteomes" id="UP000002429">
    <property type="component" value="Chromosome"/>
</dbReference>
<dbReference type="GO" id="GO:0022625">
    <property type="term" value="C:cytosolic large ribosomal subunit"/>
    <property type="evidence" value="ECO:0007669"/>
    <property type="project" value="TreeGrafter"/>
</dbReference>
<dbReference type="GO" id="GO:0003735">
    <property type="term" value="F:structural constituent of ribosome"/>
    <property type="evidence" value="ECO:0007669"/>
    <property type="project" value="InterPro"/>
</dbReference>
<dbReference type="GO" id="GO:0006412">
    <property type="term" value="P:translation"/>
    <property type="evidence" value="ECO:0007669"/>
    <property type="project" value="UniProtKB-UniRule"/>
</dbReference>
<dbReference type="CDD" id="cd01658">
    <property type="entry name" value="Ribosomal_L30"/>
    <property type="match status" value="1"/>
</dbReference>
<dbReference type="FunFam" id="3.30.1390.20:FF:000001">
    <property type="entry name" value="50S ribosomal protein L30"/>
    <property type="match status" value="1"/>
</dbReference>
<dbReference type="Gene3D" id="3.30.1390.20">
    <property type="entry name" value="Ribosomal protein L30, ferredoxin-like fold domain"/>
    <property type="match status" value="1"/>
</dbReference>
<dbReference type="HAMAP" id="MF_01371_B">
    <property type="entry name" value="Ribosomal_uL30_B"/>
    <property type="match status" value="1"/>
</dbReference>
<dbReference type="InterPro" id="IPR036919">
    <property type="entry name" value="Ribo_uL30_ferredoxin-like_sf"/>
</dbReference>
<dbReference type="InterPro" id="IPR005996">
    <property type="entry name" value="Ribosomal_uL30_bac-type"/>
</dbReference>
<dbReference type="InterPro" id="IPR016082">
    <property type="entry name" value="Ribosomal_uL30_ferredoxin-like"/>
</dbReference>
<dbReference type="NCBIfam" id="TIGR01308">
    <property type="entry name" value="rpmD_bact"/>
    <property type="match status" value="1"/>
</dbReference>
<dbReference type="PANTHER" id="PTHR15892:SF2">
    <property type="entry name" value="LARGE RIBOSOMAL SUBUNIT PROTEIN UL30M"/>
    <property type="match status" value="1"/>
</dbReference>
<dbReference type="PANTHER" id="PTHR15892">
    <property type="entry name" value="MITOCHONDRIAL RIBOSOMAL PROTEIN L30"/>
    <property type="match status" value="1"/>
</dbReference>
<dbReference type="Pfam" id="PF00327">
    <property type="entry name" value="Ribosomal_L30"/>
    <property type="match status" value="1"/>
</dbReference>
<dbReference type="PIRSF" id="PIRSF002211">
    <property type="entry name" value="Ribosomal_L30_bac-type"/>
    <property type="match status" value="1"/>
</dbReference>
<dbReference type="SUPFAM" id="SSF55129">
    <property type="entry name" value="Ribosomal protein L30p/L7e"/>
    <property type="match status" value="1"/>
</dbReference>
<reference key="1">
    <citation type="journal article" date="2010" name="PLoS ONE">
        <title>The complete genome sequence of Cupriavidus metallidurans strain CH34, a master survivalist in harsh and anthropogenic environments.</title>
        <authorList>
            <person name="Janssen P.J."/>
            <person name="Van Houdt R."/>
            <person name="Moors H."/>
            <person name="Monsieurs P."/>
            <person name="Morin N."/>
            <person name="Michaux A."/>
            <person name="Benotmane M.A."/>
            <person name="Leys N."/>
            <person name="Vallaeys T."/>
            <person name="Lapidus A."/>
            <person name="Monchy S."/>
            <person name="Medigue C."/>
            <person name="Taghavi S."/>
            <person name="McCorkle S."/>
            <person name="Dunn J."/>
            <person name="van der Lelie D."/>
            <person name="Mergeay M."/>
        </authorList>
    </citation>
    <scope>NUCLEOTIDE SEQUENCE [LARGE SCALE GENOMIC DNA]</scope>
    <source>
        <strain>ATCC 43123 / DSM 2839 / NBRC 102507 / CH34</strain>
    </source>
</reference>
<protein>
    <recommendedName>
        <fullName evidence="1">Large ribosomal subunit protein uL30</fullName>
    </recommendedName>
    <alternativeName>
        <fullName evidence="2">50S ribosomal protein L30</fullName>
    </alternativeName>
</protein>
<accession>Q1LI55</accession>
<name>RL30_CUPMC</name>
<organism>
    <name type="scientific">Cupriavidus metallidurans (strain ATCC 43123 / DSM 2839 / NBRC 102507 / CH34)</name>
    <name type="common">Ralstonia metallidurans</name>
    <dbReference type="NCBI Taxonomy" id="266264"/>
    <lineage>
        <taxon>Bacteria</taxon>
        <taxon>Pseudomonadati</taxon>
        <taxon>Pseudomonadota</taxon>
        <taxon>Betaproteobacteria</taxon>
        <taxon>Burkholderiales</taxon>
        <taxon>Burkholderiaceae</taxon>
        <taxon>Cupriavidus</taxon>
    </lineage>
</organism>
<proteinExistence type="inferred from homology"/>